<feature type="chain" id="PRO_1000196108" description="Large ribosomal subunit protein bL34">
    <location>
        <begin position="1"/>
        <end position="45"/>
    </location>
</feature>
<feature type="region of interest" description="Disordered" evidence="2">
    <location>
        <begin position="1"/>
        <end position="21"/>
    </location>
</feature>
<feature type="compositionally biased region" description="Polar residues" evidence="2">
    <location>
        <begin position="1"/>
        <end position="10"/>
    </location>
</feature>
<feature type="compositionally biased region" description="Basic residues" evidence="2">
    <location>
        <begin position="11"/>
        <end position="20"/>
    </location>
</feature>
<comment type="similarity">
    <text evidence="1">Belongs to the bacterial ribosomal protein bL34 family.</text>
</comment>
<proteinExistence type="inferred from homology"/>
<protein>
    <recommendedName>
        <fullName evidence="1">Large ribosomal subunit protein bL34</fullName>
    </recommendedName>
    <alternativeName>
        <fullName evidence="3">50S ribosomal protein L34</fullName>
    </alternativeName>
</protein>
<keyword id="KW-0687">Ribonucleoprotein</keyword>
<keyword id="KW-0689">Ribosomal protein</keyword>
<gene>
    <name evidence="1" type="primary">rpmH</name>
    <name type="ordered locus">Sbal223_4328</name>
</gene>
<name>RL34_SHEB2</name>
<accession>B8EDW8</accession>
<evidence type="ECO:0000255" key="1">
    <source>
        <dbReference type="HAMAP-Rule" id="MF_00391"/>
    </source>
</evidence>
<evidence type="ECO:0000256" key="2">
    <source>
        <dbReference type="SAM" id="MobiDB-lite"/>
    </source>
</evidence>
<evidence type="ECO:0000305" key="3"/>
<organism>
    <name type="scientific">Shewanella baltica (strain OS223)</name>
    <dbReference type="NCBI Taxonomy" id="407976"/>
    <lineage>
        <taxon>Bacteria</taxon>
        <taxon>Pseudomonadati</taxon>
        <taxon>Pseudomonadota</taxon>
        <taxon>Gammaproteobacteria</taxon>
        <taxon>Alteromonadales</taxon>
        <taxon>Shewanellaceae</taxon>
        <taxon>Shewanella</taxon>
    </lineage>
</organism>
<sequence>MSKRTFQPSNLKRKRSHGFRARMATVGGRKVLARRRAKGRARLSA</sequence>
<dbReference type="EMBL" id="CP001252">
    <property type="protein sequence ID" value="ACK48794.1"/>
    <property type="molecule type" value="Genomic_DNA"/>
</dbReference>
<dbReference type="RefSeq" id="WP_006083827.1">
    <property type="nucleotide sequence ID" value="NC_011663.1"/>
</dbReference>
<dbReference type="SMR" id="B8EDW8"/>
<dbReference type="GeneID" id="90572020"/>
<dbReference type="KEGG" id="sbp:Sbal223_4328"/>
<dbReference type="HOGENOM" id="CLU_129938_2_0_6"/>
<dbReference type="Proteomes" id="UP000002507">
    <property type="component" value="Chromosome"/>
</dbReference>
<dbReference type="GO" id="GO:1990904">
    <property type="term" value="C:ribonucleoprotein complex"/>
    <property type="evidence" value="ECO:0007669"/>
    <property type="project" value="UniProtKB-KW"/>
</dbReference>
<dbReference type="GO" id="GO:0005840">
    <property type="term" value="C:ribosome"/>
    <property type="evidence" value="ECO:0007669"/>
    <property type="project" value="UniProtKB-KW"/>
</dbReference>
<dbReference type="GO" id="GO:0003735">
    <property type="term" value="F:structural constituent of ribosome"/>
    <property type="evidence" value="ECO:0007669"/>
    <property type="project" value="InterPro"/>
</dbReference>
<dbReference type="GO" id="GO:0006412">
    <property type="term" value="P:translation"/>
    <property type="evidence" value="ECO:0007669"/>
    <property type="project" value="UniProtKB-UniRule"/>
</dbReference>
<dbReference type="FunFam" id="1.10.287.3980:FF:000001">
    <property type="entry name" value="Mitochondrial ribosomal protein L34"/>
    <property type="match status" value="1"/>
</dbReference>
<dbReference type="Gene3D" id="1.10.287.3980">
    <property type="match status" value="1"/>
</dbReference>
<dbReference type="HAMAP" id="MF_00391">
    <property type="entry name" value="Ribosomal_bL34"/>
    <property type="match status" value="1"/>
</dbReference>
<dbReference type="InterPro" id="IPR000271">
    <property type="entry name" value="Ribosomal_bL34"/>
</dbReference>
<dbReference type="InterPro" id="IPR020939">
    <property type="entry name" value="Ribosomal_bL34_CS"/>
</dbReference>
<dbReference type="NCBIfam" id="TIGR01030">
    <property type="entry name" value="rpmH_bact"/>
    <property type="match status" value="1"/>
</dbReference>
<dbReference type="PANTHER" id="PTHR14503:SF4">
    <property type="entry name" value="LARGE RIBOSOMAL SUBUNIT PROTEIN BL34M"/>
    <property type="match status" value="1"/>
</dbReference>
<dbReference type="PANTHER" id="PTHR14503">
    <property type="entry name" value="MITOCHONDRIAL RIBOSOMAL PROTEIN 34 FAMILY MEMBER"/>
    <property type="match status" value="1"/>
</dbReference>
<dbReference type="Pfam" id="PF00468">
    <property type="entry name" value="Ribosomal_L34"/>
    <property type="match status" value="1"/>
</dbReference>
<dbReference type="PROSITE" id="PS00784">
    <property type="entry name" value="RIBOSOMAL_L34"/>
    <property type="match status" value="1"/>
</dbReference>
<reference key="1">
    <citation type="submission" date="2008-12" db="EMBL/GenBank/DDBJ databases">
        <title>Complete sequence of chromosome of Shewanella baltica OS223.</title>
        <authorList>
            <consortium name="US DOE Joint Genome Institute"/>
            <person name="Lucas S."/>
            <person name="Copeland A."/>
            <person name="Lapidus A."/>
            <person name="Glavina del Rio T."/>
            <person name="Dalin E."/>
            <person name="Tice H."/>
            <person name="Bruce D."/>
            <person name="Goodwin L."/>
            <person name="Pitluck S."/>
            <person name="Chertkov O."/>
            <person name="Meincke L."/>
            <person name="Brettin T."/>
            <person name="Detter J.C."/>
            <person name="Han C."/>
            <person name="Kuske C.R."/>
            <person name="Larimer F."/>
            <person name="Land M."/>
            <person name="Hauser L."/>
            <person name="Kyrpides N."/>
            <person name="Ovchinnikova G."/>
            <person name="Brettar I."/>
            <person name="Rodrigues J."/>
            <person name="Konstantinidis K."/>
            <person name="Tiedje J."/>
        </authorList>
    </citation>
    <scope>NUCLEOTIDE SEQUENCE [LARGE SCALE GENOMIC DNA]</scope>
    <source>
        <strain>OS223</strain>
    </source>
</reference>